<comment type="function">
    <text evidence="1">Endonuclease that specifically degrades the RNA of RNA-DNA hybrids.</text>
</comment>
<comment type="catalytic activity">
    <reaction evidence="1">
        <text>Endonucleolytic cleavage to 5'-phosphomonoester.</text>
        <dbReference type="EC" id="3.1.26.4"/>
    </reaction>
</comment>
<comment type="cofactor">
    <cofactor evidence="1">
        <name>Mn(2+)</name>
        <dbReference type="ChEBI" id="CHEBI:29035"/>
    </cofactor>
    <cofactor evidence="1">
        <name>Mg(2+)</name>
        <dbReference type="ChEBI" id="CHEBI:18420"/>
    </cofactor>
    <text evidence="1">Manganese or magnesium. Binds 1 divalent metal ion per monomer in the absence of substrate. May bind a second metal ion after substrate binding.</text>
</comment>
<comment type="subcellular location">
    <subcellularLocation>
        <location evidence="1">Cytoplasm</location>
    </subcellularLocation>
</comment>
<comment type="similarity">
    <text evidence="1">Belongs to the RNase HII family. RnhC subfamily.</text>
</comment>
<sequence length="310" mass="34547">MTNIVHKLTNSDIQQLMSKIPFETSQLSQGMKAKTKYKGTSISIYNSNKVMFQGKDAERIAAQLLPNVTKSQPSSKKASTTKQTISYNQFQCIGSDEAGSGDYFGPLTVCAAYVSHKNVQILKALGVDDSKKLTDTKIVELAEQLVTFIPHSLLVMNNEKYNEKQKAGWSQVKMKAVLHNEAIKNVTQKIDTTELDYIVIDQFAEAGVYKRYALSDLPFSNKTKFETKGESKSIAIAAASIISRYAFVKHMDRLTQSVKTDIPKGASNKVDLTAAKIIERKGIAYLDSISKKHFANRKKAENLVQKKYND</sequence>
<name>RNH3_STAS1</name>
<proteinExistence type="inferred from homology"/>
<keyword id="KW-0963">Cytoplasm</keyword>
<keyword id="KW-0255">Endonuclease</keyword>
<keyword id="KW-0378">Hydrolase</keyword>
<keyword id="KW-0460">Magnesium</keyword>
<keyword id="KW-0479">Metal-binding</keyword>
<keyword id="KW-0540">Nuclease</keyword>
<keyword id="KW-1185">Reference proteome</keyword>
<reference key="1">
    <citation type="journal article" date="2005" name="Proc. Natl. Acad. Sci. U.S.A.">
        <title>Whole genome sequence of Staphylococcus saprophyticus reveals the pathogenesis of uncomplicated urinary tract infection.</title>
        <authorList>
            <person name="Kuroda M."/>
            <person name="Yamashita A."/>
            <person name="Hirakawa H."/>
            <person name="Kumano M."/>
            <person name="Morikawa K."/>
            <person name="Higashide M."/>
            <person name="Maruyama A."/>
            <person name="Inose Y."/>
            <person name="Matoba K."/>
            <person name="Toh H."/>
            <person name="Kuhara S."/>
            <person name="Hattori M."/>
            <person name="Ohta T."/>
        </authorList>
    </citation>
    <scope>NUCLEOTIDE SEQUENCE [LARGE SCALE GENOMIC DNA]</scope>
    <source>
        <strain>ATCC 15305 / DSM 20229 / NCIMB 8711 / NCTC 7292 / S-41</strain>
    </source>
</reference>
<feature type="chain" id="PRO_1000031239" description="Ribonuclease HIII">
    <location>
        <begin position="1"/>
        <end position="310"/>
    </location>
</feature>
<feature type="domain" description="RNase H type-2" evidence="2">
    <location>
        <begin position="90"/>
        <end position="306"/>
    </location>
</feature>
<feature type="binding site" evidence="1">
    <location>
        <position position="96"/>
    </location>
    <ligand>
        <name>a divalent metal cation</name>
        <dbReference type="ChEBI" id="CHEBI:60240"/>
    </ligand>
</feature>
<feature type="binding site" evidence="1">
    <location>
        <position position="97"/>
    </location>
    <ligand>
        <name>a divalent metal cation</name>
        <dbReference type="ChEBI" id="CHEBI:60240"/>
    </ligand>
</feature>
<feature type="binding site" evidence="1">
    <location>
        <position position="201"/>
    </location>
    <ligand>
        <name>a divalent metal cation</name>
        <dbReference type="ChEBI" id="CHEBI:60240"/>
    </ligand>
</feature>
<organism>
    <name type="scientific">Staphylococcus saprophyticus subsp. saprophyticus (strain ATCC 15305 / DSM 20229 / NCIMB 8711 / NCTC 7292 / S-41)</name>
    <dbReference type="NCBI Taxonomy" id="342451"/>
    <lineage>
        <taxon>Bacteria</taxon>
        <taxon>Bacillati</taxon>
        <taxon>Bacillota</taxon>
        <taxon>Bacilli</taxon>
        <taxon>Bacillales</taxon>
        <taxon>Staphylococcaceae</taxon>
        <taxon>Staphylococcus</taxon>
    </lineage>
</organism>
<accession>Q49WQ7</accession>
<evidence type="ECO:0000255" key="1">
    <source>
        <dbReference type="HAMAP-Rule" id="MF_00053"/>
    </source>
</evidence>
<evidence type="ECO:0000255" key="2">
    <source>
        <dbReference type="PROSITE-ProRule" id="PRU01319"/>
    </source>
</evidence>
<gene>
    <name evidence="1" type="primary">rnhC</name>
    <name type="ordered locus">SSP1655</name>
</gene>
<dbReference type="EC" id="3.1.26.4" evidence="1"/>
<dbReference type="EMBL" id="AP008934">
    <property type="protein sequence ID" value="BAE18800.1"/>
    <property type="molecule type" value="Genomic_DNA"/>
</dbReference>
<dbReference type="RefSeq" id="WP_011303387.1">
    <property type="nucleotide sequence ID" value="NZ_MTGA01000039.1"/>
</dbReference>
<dbReference type="SMR" id="Q49WQ7"/>
<dbReference type="GeneID" id="3615145"/>
<dbReference type="KEGG" id="ssp:SSP1655"/>
<dbReference type="PATRIC" id="fig|342451.11.peg.1654"/>
<dbReference type="eggNOG" id="COG1039">
    <property type="taxonomic scope" value="Bacteria"/>
</dbReference>
<dbReference type="HOGENOM" id="CLU_059546_1_0_9"/>
<dbReference type="OrthoDB" id="9777935at2"/>
<dbReference type="Proteomes" id="UP000006371">
    <property type="component" value="Chromosome"/>
</dbReference>
<dbReference type="GO" id="GO:0005737">
    <property type="term" value="C:cytoplasm"/>
    <property type="evidence" value="ECO:0007669"/>
    <property type="project" value="UniProtKB-SubCell"/>
</dbReference>
<dbReference type="GO" id="GO:0032299">
    <property type="term" value="C:ribonuclease H2 complex"/>
    <property type="evidence" value="ECO:0007669"/>
    <property type="project" value="TreeGrafter"/>
</dbReference>
<dbReference type="GO" id="GO:0000287">
    <property type="term" value="F:magnesium ion binding"/>
    <property type="evidence" value="ECO:0007669"/>
    <property type="project" value="UniProtKB-UniRule"/>
</dbReference>
<dbReference type="GO" id="GO:0003723">
    <property type="term" value="F:RNA binding"/>
    <property type="evidence" value="ECO:0007669"/>
    <property type="project" value="InterPro"/>
</dbReference>
<dbReference type="GO" id="GO:0004523">
    <property type="term" value="F:RNA-DNA hybrid ribonuclease activity"/>
    <property type="evidence" value="ECO:0007669"/>
    <property type="project" value="UniProtKB-UniRule"/>
</dbReference>
<dbReference type="GO" id="GO:0043137">
    <property type="term" value="P:DNA replication, removal of RNA primer"/>
    <property type="evidence" value="ECO:0007669"/>
    <property type="project" value="TreeGrafter"/>
</dbReference>
<dbReference type="GO" id="GO:0006298">
    <property type="term" value="P:mismatch repair"/>
    <property type="evidence" value="ECO:0007669"/>
    <property type="project" value="TreeGrafter"/>
</dbReference>
<dbReference type="CDD" id="cd06590">
    <property type="entry name" value="RNase_HII_bacteria_HIII_like"/>
    <property type="match status" value="1"/>
</dbReference>
<dbReference type="CDD" id="cd14796">
    <property type="entry name" value="RNAse_HIII_N"/>
    <property type="match status" value="1"/>
</dbReference>
<dbReference type="FunFam" id="3.30.420.10:FF:000047">
    <property type="entry name" value="Ribonuclease HIII"/>
    <property type="match status" value="1"/>
</dbReference>
<dbReference type="Gene3D" id="3.30.420.10">
    <property type="entry name" value="Ribonuclease H-like superfamily/Ribonuclease H"/>
    <property type="match status" value="1"/>
</dbReference>
<dbReference type="Gene3D" id="3.30.310.10">
    <property type="entry name" value="TATA-Binding Protein"/>
    <property type="match status" value="1"/>
</dbReference>
<dbReference type="HAMAP" id="MF_00053">
    <property type="entry name" value="RNase_HIII"/>
    <property type="match status" value="1"/>
</dbReference>
<dbReference type="InterPro" id="IPR001352">
    <property type="entry name" value="RNase_HII/HIII"/>
</dbReference>
<dbReference type="InterPro" id="IPR024567">
    <property type="entry name" value="RNase_HII/HIII_dom"/>
</dbReference>
<dbReference type="InterPro" id="IPR004641">
    <property type="entry name" value="RNase_HIII"/>
</dbReference>
<dbReference type="InterPro" id="IPR024568">
    <property type="entry name" value="RNase_HIII_N"/>
</dbReference>
<dbReference type="InterPro" id="IPR012337">
    <property type="entry name" value="RNaseH-like_sf"/>
</dbReference>
<dbReference type="InterPro" id="IPR036397">
    <property type="entry name" value="RNaseH_sf"/>
</dbReference>
<dbReference type="InterPro" id="IPR012295">
    <property type="entry name" value="TBP_dom_sf"/>
</dbReference>
<dbReference type="NCBIfam" id="TIGR00716">
    <property type="entry name" value="rnhC"/>
    <property type="match status" value="1"/>
</dbReference>
<dbReference type="PANTHER" id="PTHR10954:SF23">
    <property type="entry name" value="RIBONUCLEASE"/>
    <property type="match status" value="1"/>
</dbReference>
<dbReference type="PANTHER" id="PTHR10954">
    <property type="entry name" value="RIBONUCLEASE H2 SUBUNIT A"/>
    <property type="match status" value="1"/>
</dbReference>
<dbReference type="Pfam" id="PF11858">
    <property type="entry name" value="DUF3378"/>
    <property type="match status" value="1"/>
</dbReference>
<dbReference type="Pfam" id="PF01351">
    <property type="entry name" value="RNase_HII"/>
    <property type="match status" value="1"/>
</dbReference>
<dbReference type="PIRSF" id="PIRSF037748">
    <property type="entry name" value="RnhC"/>
    <property type="match status" value="1"/>
</dbReference>
<dbReference type="SUPFAM" id="SSF53098">
    <property type="entry name" value="Ribonuclease H-like"/>
    <property type="match status" value="1"/>
</dbReference>
<dbReference type="PROSITE" id="PS51975">
    <property type="entry name" value="RNASE_H_2"/>
    <property type="match status" value="1"/>
</dbReference>
<protein>
    <recommendedName>
        <fullName evidence="1">Ribonuclease HIII</fullName>
        <shortName evidence="1">RNase HIII</shortName>
        <ecNumber evidence="1">3.1.26.4</ecNumber>
    </recommendedName>
</protein>